<protein>
    <recommendedName>
        <fullName evidence="1">Glutamate-1-semialdehyde 2,1-aminomutase</fullName>
        <shortName evidence="1">GSA</shortName>
        <ecNumber evidence="1">5.4.3.8</ecNumber>
    </recommendedName>
    <alternativeName>
        <fullName evidence="1">Glutamate-1-semialdehyde aminotransferase</fullName>
        <shortName evidence="1">GSA-AT</shortName>
    </alternativeName>
</protein>
<name>GSA_CHLT3</name>
<keyword id="KW-0149">Chlorophyll biosynthesis</keyword>
<keyword id="KW-0963">Cytoplasm</keyword>
<keyword id="KW-0413">Isomerase</keyword>
<keyword id="KW-0627">Porphyrin biosynthesis</keyword>
<keyword id="KW-0663">Pyridoxal phosphate</keyword>
<keyword id="KW-1185">Reference proteome</keyword>
<accession>B3QSA6</accession>
<dbReference type="EC" id="5.4.3.8" evidence="1"/>
<dbReference type="EMBL" id="CP001100">
    <property type="protein sequence ID" value="ACF12497.1"/>
    <property type="molecule type" value="Genomic_DNA"/>
</dbReference>
<dbReference type="SMR" id="B3QSA6"/>
<dbReference type="STRING" id="517418.Ctha_0025"/>
<dbReference type="KEGG" id="cts:Ctha_0025"/>
<dbReference type="eggNOG" id="COG0001">
    <property type="taxonomic scope" value="Bacteria"/>
</dbReference>
<dbReference type="HOGENOM" id="CLU_016922_1_5_10"/>
<dbReference type="OrthoDB" id="9807885at2"/>
<dbReference type="UniPathway" id="UPA00251">
    <property type="reaction ID" value="UER00317"/>
</dbReference>
<dbReference type="UniPathway" id="UPA00668"/>
<dbReference type="Proteomes" id="UP000001208">
    <property type="component" value="Chromosome"/>
</dbReference>
<dbReference type="GO" id="GO:0005737">
    <property type="term" value="C:cytoplasm"/>
    <property type="evidence" value="ECO:0007669"/>
    <property type="project" value="UniProtKB-SubCell"/>
</dbReference>
<dbReference type="GO" id="GO:0042286">
    <property type="term" value="F:glutamate-1-semialdehyde 2,1-aminomutase activity"/>
    <property type="evidence" value="ECO:0007669"/>
    <property type="project" value="UniProtKB-UniRule"/>
</dbReference>
<dbReference type="GO" id="GO:0030170">
    <property type="term" value="F:pyridoxal phosphate binding"/>
    <property type="evidence" value="ECO:0007669"/>
    <property type="project" value="InterPro"/>
</dbReference>
<dbReference type="GO" id="GO:0008483">
    <property type="term" value="F:transaminase activity"/>
    <property type="evidence" value="ECO:0007669"/>
    <property type="project" value="InterPro"/>
</dbReference>
<dbReference type="GO" id="GO:0015995">
    <property type="term" value="P:chlorophyll biosynthetic process"/>
    <property type="evidence" value="ECO:0007669"/>
    <property type="project" value="UniProtKB-UniRule"/>
</dbReference>
<dbReference type="GO" id="GO:0006782">
    <property type="term" value="P:protoporphyrinogen IX biosynthetic process"/>
    <property type="evidence" value="ECO:0007669"/>
    <property type="project" value="UniProtKB-UniRule"/>
</dbReference>
<dbReference type="CDD" id="cd00610">
    <property type="entry name" value="OAT_like"/>
    <property type="match status" value="1"/>
</dbReference>
<dbReference type="FunFam" id="3.40.640.10:FF:000021">
    <property type="entry name" value="Glutamate-1-semialdehyde 2,1-aminomutase"/>
    <property type="match status" value="1"/>
</dbReference>
<dbReference type="Gene3D" id="3.90.1150.10">
    <property type="entry name" value="Aspartate Aminotransferase, domain 1"/>
    <property type="match status" value="1"/>
</dbReference>
<dbReference type="Gene3D" id="3.40.640.10">
    <property type="entry name" value="Type I PLP-dependent aspartate aminotransferase-like (Major domain)"/>
    <property type="match status" value="1"/>
</dbReference>
<dbReference type="HAMAP" id="MF_00375">
    <property type="entry name" value="HemL_aminotrans_3"/>
    <property type="match status" value="1"/>
</dbReference>
<dbReference type="InterPro" id="IPR004639">
    <property type="entry name" value="4pyrrol_synth_GluAld_NH2Trfase"/>
</dbReference>
<dbReference type="InterPro" id="IPR005814">
    <property type="entry name" value="Aminotrans_3"/>
</dbReference>
<dbReference type="InterPro" id="IPR049704">
    <property type="entry name" value="Aminotrans_3_PPA_site"/>
</dbReference>
<dbReference type="InterPro" id="IPR015424">
    <property type="entry name" value="PyrdxlP-dep_Trfase"/>
</dbReference>
<dbReference type="InterPro" id="IPR015421">
    <property type="entry name" value="PyrdxlP-dep_Trfase_major"/>
</dbReference>
<dbReference type="InterPro" id="IPR015422">
    <property type="entry name" value="PyrdxlP-dep_Trfase_small"/>
</dbReference>
<dbReference type="NCBIfam" id="TIGR00713">
    <property type="entry name" value="hemL"/>
    <property type="match status" value="1"/>
</dbReference>
<dbReference type="NCBIfam" id="NF000818">
    <property type="entry name" value="PRK00062.1"/>
    <property type="match status" value="1"/>
</dbReference>
<dbReference type="PANTHER" id="PTHR43713">
    <property type="entry name" value="GLUTAMATE-1-SEMIALDEHYDE 2,1-AMINOMUTASE"/>
    <property type="match status" value="1"/>
</dbReference>
<dbReference type="PANTHER" id="PTHR43713:SF3">
    <property type="entry name" value="GLUTAMATE-1-SEMIALDEHYDE 2,1-AMINOMUTASE 1, CHLOROPLASTIC-RELATED"/>
    <property type="match status" value="1"/>
</dbReference>
<dbReference type="Pfam" id="PF00202">
    <property type="entry name" value="Aminotran_3"/>
    <property type="match status" value="1"/>
</dbReference>
<dbReference type="SUPFAM" id="SSF53383">
    <property type="entry name" value="PLP-dependent transferases"/>
    <property type="match status" value="1"/>
</dbReference>
<dbReference type="PROSITE" id="PS00600">
    <property type="entry name" value="AA_TRANSFER_CLASS_3"/>
    <property type="match status" value="1"/>
</dbReference>
<proteinExistence type="inferred from homology"/>
<feature type="chain" id="PRO_1000121868" description="Glutamate-1-semialdehyde 2,1-aminomutase">
    <location>
        <begin position="1"/>
        <end position="432"/>
    </location>
</feature>
<feature type="modified residue" description="N6-(pyridoxal phosphate)lysine" evidence="1">
    <location>
        <position position="269"/>
    </location>
</feature>
<comment type="catalytic activity">
    <reaction evidence="1">
        <text>(S)-4-amino-5-oxopentanoate = 5-aminolevulinate</text>
        <dbReference type="Rhea" id="RHEA:14265"/>
        <dbReference type="ChEBI" id="CHEBI:57501"/>
        <dbReference type="ChEBI" id="CHEBI:356416"/>
        <dbReference type="EC" id="5.4.3.8"/>
    </reaction>
</comment>
<comment type="cofactor">
    <cofactor evidence="1">
        <name>pyridoxal 5'-phosphate</name>
        <dbReference type="ChEBI" id="CHEBI:597326"/>
    </cofactor>
</comment>
<comment type="pathway">
    <text evidence="1">Porphyrin-containing compound metabolism; protoporphyrin-IX biosynthesis; 5-aminolevulinate from L-glutamyl-tRNA(Glu): step 2/2.</text>
</comment>
<comment type="pathway">
    <text evidence="1">Porphyrin-containing compound metabolism; chlorophyll biosynthesis.</text>
</comment>
<comment type="subunit">
    <text evidence="1">Homodimer.</text>
</comment>
<comment type="subcellular location">
    <subcellularLocation>
        <location evidence="1">Cytoplasm</location>
    </subcellularLocation>
</comment>
<comment type="similarity">
    <text evidence="1">Belongs to the class-III pyridoxal-phosphate-dependent aminotransferase family. HemL subfamily.</text>
</comment>
<gene>
    <name evidence="1" type="primary">hemL</name>
    <name type="ordered locus">Ctha_0025</name>
</gene>
<organism>
    <name type="scientific">Chloroherpeton thalassium (strain ATCC 35110 / GB-78)</name>
    <dbReference type="NCBI Taxonomy" id="517418"/>
    <lineage>
        <taxon>Bacteria</taxon>
        <taxon>Pseudomonadati</taxon>
        <taxon>Chlorobiota</taxon>
        <taxon>Chlorobiia</taxon>
        <taxon>Chlorobiales</taxon>
        <taxon>Chloroherpetonaceae</taxon>
        <taxon>Chloroherpeton</taxon>
    </lineage>
</organism>
<evidence type="ECO:0000255" key="1">
    <source>
        <dbReference type="HAMAP-Rule" id="MF_00375"/>
    </source>
</evidence>
<sequence length="432" mass="46182">MLNLKTSAALFERAKKVIPGGVNSPVRAFNSVGGTPVFVTKGEGARMIDVDGNSYIDYVGSWGPFILGHSHPRVIEAIERTMKAHGTSFGAPTELEIELAELIIKVVPSVEMVRMVNSGTEATMSAIRLARGYTKREKIIKFEGCYHGHGDSFLIKAGSGALTLGAPSSPGVTEGTAKDTLNATYNDIESVRALVDSNKGNVAAIIIEAVGGNMGVVPSKKEFLVALRELCDKEGIVLIFDEVMTGFRVALGGAQEVYGITPDLTTMGKIIGGGLPVGAYGGKKEIMEHVSPVGTVYQAGTLSGNPLAMSAGLATIKILAEENPYPELEKKAVIIEEGFKSNLEKLGLNLCQTRVGSMSCLFFTDKEVVDFETANSSDTAKFATYFNSMLESGIYLACSQFEAMFISTMHTEEDLQKTIEANYNALKLAYGK</sequence>
<reference key="1">
    <citation type="submission" date="2008-06" db="EMBL/GenBank/DDBJ databases">
        <title>Complete sequence of Chloroherpeton thalassium ATCC 35110.</title>
        <authorList>
            <consortium name="US DOE Joint Genome Institute"/>
            <person name="Lucas S."/>
            <person name="Copeland A."/>
            <person name="Lapidus A."/>
            <person name="Glavina del Rio T."/>
            <person name="Dalin E."/>
            <person name="Tice H."/>
            <person name="Bruce D."/>
            <person name="Goodwin L."/>
            <person name="Pitluck S."/>
            <person name="Schmutz J."/>
            <person name="Larimer F."/>
            <person name="Land M."/>
            <person name="Hauser L."/>
            <person name="Kyrpides N."/>
            <person name="Mikhailova N."/>
            <person name="Liu Z."/>
            <person name="Li T."/>
            <person name="Zhao F."/>
            <person name="Overmann J."/>
            <person name="Bryant D.A."/>
            <person name="Richardson P."/>
        </authorList>
    </citation>
    <scope>NUCLEOTIDE SEQUENCE [LARGE SCALE GENOMIC DNA]</scope>
    <source>
        <strain>ATCC 35110 / GB-78</strain>
    </source>
</reference>